<sequence>MPCPRPFWLRHSRAPQGSGPSSPGSLSAPRSPSRGEDQEEEEEEEGDGSPGSGPILPPASPVECLICVSSFDGVFKLPKRLDCGHVFCLECLARLSLATAGGGNAVACPVCRAPTRLAPRRGLPALPTQSGLLPRDARAPPSRQGSVRFDRRRGLLYLRPPPPPPGPRKARAPPPPPPLRLGRPLSRRLSLASPAWVFNAAVALAVLVAAGLVVSGVYIFFLIPHATSSGPPRPQLVALAPAPGFSWFPPRPPPGSPWAPAWTPRPTGPDLDTALPGTAEDALEPEAGPEDPAEAERTLDRRSDGTWGTEAGPGWAPWPRGARRLWGSQ</sequence>
<evidence type="ECO:0000255" key="1"/>
<evidence type="ECO:0000255" key="2">
    <source>
        <dbReference type="PROSITE-ProRule" id="PRU00175"/>
    </source>
</evidence>
<evidence type="ECO:0000256" key="3">
    <source>
        <dbReference type="SAM" id="MobiDB-lite"/>
    </source>
</evidence>
<evidence type="ECO:0000312" key="4">
    <source>
        <dbReference type="HGNC" id="HGNC:51249"/>
    </source>
</evidence>
<reference key="1">
    <citation type="journal article" date="2004" name="Nature">
        <title>The DNA sequence and biology of human chromosome 19.</title>
        <authorList>
            <person name="Grimwood J."/>
            <person name="Gordon L.A."/>
            <person name="Olsen A.S."/>
            <person name="Terry A."/>
            <person name="Schmutz J."/>
            <person name="Lamerdin J.E."/>
            <person name="Hellsten U."/>
            <person name="Goodstein D."/>
            <person name="Couronne O."/>
            <person name="Tran-Gyamfi M."/>
            <person name="Aerts A."/>
            <person name="Altherr M."/>
            <person name="Ashworth L."/>
            <person name="Bajorek E."/>
            <person name="Black S."/>
            <person name="Branscomb E."/>
            <person name="Caenepeel S."/>
            <person name="Carrano A.V."/>
            <person name="Caoile C."/>
            <person name="Chan Y.M."/>
            <person name="Christensen M."/>
            <person name="Cleland C.A."/>
            <person name="Copeland A."/>
            <person name="Dalin E."/>
            <person name="Dehal P."/>
            <person name="Denys M."/>
            <person name="Detter J.C."/>
            <person name="Escobar J."/>
            <person name="Flowers D."/>
            <person name="Fotopulos D."/>
            <person name="Garcia C."/>
            <person name="Georgescu A.M."/>
            <person name="Glavina T."/>
            <person name="Gomez M."/>
            <person name="Gonzales E."/>
            <person name="Groza M."/>
            <person name="Hammon N."/>
            <person name="Hawkins T."/>
            <person name="Haydu L."/>
            <person name="Ho I."/>
            <person name="Huang W."/>
            <person name="Israni S."/>
            <person name="Jett J."/>
            <person name="Kadner K."/>
            <person name="Kimball H."/>
            <person name="Kobayashi A."/>
            <person name="Larionov V."/>
            <person name="Leem S.-H."/>
            <person name="Lopez F."/>
            <person name="Lou Y."/>
            <person name="Lowry S."/>
            <person name="Malfatti S."/>
            <person name="Martinez D."/>
            <person name="McCready P.M."/>
            <person name="Medina C."/>
            <person name="Morgan J."/>
            <person name="Nelson K."/>
            <person name="Nolan M."/>
            <person name="Ovcharenko I."/>
            <person name="Pitluck S."/>
            <person name="Pollard M."/>
            <person name="Popkie A.P."/>
            <person name="Predki P."/>
            <person name="Quan G."/>
            <person name="Ramirez L."/>
            <person name="Rash S."/>
            <person name="Retterer J."/>
            <person name="Rodriguez A."/>
            <person name="Rogers S."/>
            <person name="Salamov A."/>
            <person name="Salazar A."/>
            <person name="She X."/>
            <person name="Smith D."/>
            <person name="Slezak T."/>
            <person name="Solovyev V."/>
            <person name="Thayer N."/>
            <person name="Tice H."/>
            <person name="Tsai M."/>
            <person name="Ustaszewska A."/>
            <person name="Vo N."/>
            <person name="Wagner M."/>
            <person name="Wheeler J."/>
            <person name="Wu K."/>
            <person name="Xie G."/>
            <person name="Yang J."/>
            <person name="Dubchak I."/>
            <person name="Furey T.S."/>
            <person name="DeJong P."/>
            <person name="Dickson M."/>
            <person name="Gordon D."/>
            <person name="Eichler E.E."/>
            <person name="Pennacchio L.A."/>
            <person name="Richardson P."/>
            <person name="Stubbs L."/>
            <person name="Rokhsar D.S."/>
            <person name="Myers R.M."/>
            <person name="Rubin E.M."/>
            <person name="Lucas S.M."/>
        </authorList>
    </citation>
    <scope>NUCLEOTIDE SEQUENCE [LARGE SCALE GENOMIC DNA]</scope>
</reference>
<reference key="2">
    <citation type="submission" date="2005-07" db="EMBL/GenBank/DDBJ databases">
        <authorList>
            <person name="Mural R.J."/>
            <person name="Istrail S."/>
            <person name="Sutton G.G."/>
            <person name="Florea L."/>
            <person name="Halpern A.L."/>
            <person name="Mobarry C.M."/>
            <person name="Lippert R."/>
            <person name="Walenz B."/>
            <person name="Shatkay H."/>
            <person name="Dew I."/>
            <person name="Miller J.R."/>
            <person name="Flanigan M.J."/>
            <person name="Edwards N.J."/>
            <person name="Bolanos R."/>
            <person name="Fasulo D."/>
            <person name="Halldorsson B.V."/>
            <person name="Hannenhalli S."/>
            <person name="Turner R."/>
            <person name="Yooseph S."/>
            <person name="Lu F."/>
            <person name="Nusskern D.R."/>
            <person name="Shue B.C."/>
            <person name="Zheng X.H."/>
            <person name="Zhong F."/>
            <person name="Delcher A.L."/>
            <person name="Huson D.H."/>
            <person name="Kravitz S.A."/>
            <person name="Mouchard L."/>
            <person name="Reinert K."/>
            <person name="Remington K.A."/>
            <person name="Clark A.G."/>
            <person name="Waterman M.S."/>
            <person name="Eichler E.E."/>
            <person name="Adams M.D."/>
            <person name="Hunkapiller M.W."/>
            <person name="Myers E.W."/>
            <person name="Venter J.C."/>
        </authorList>
    </citation>
    <scope>NUCLEOTIDE SEQUENCE [LARGE SCALE GENOMIC DNA]</scope>
</reference>
<comment type="subcellular location">
    <subcellularLocation>
        <location evidence="1">Membrane</location>
        <topology evidence="1">Single-pass membrane protein</topology>
    </subcellularLocation>
</comment>
<keyword id="KW-0472">Membrane</keyword>
<keyword id="KW-0479">Metal-binding</keyword>
<keyword id="KW-1185">Reference proteome</keyword>
<keyword id="KW-0812">Transmembrane</keyword>
<keyword id="KW-1133">Transmembrane helix</keyword>
<keyword id="KW-0862">Zinc</keyword>
<keyword id="KW-0863">Zinc-finger</keyword>
<accession>M0QZC1</accession>
<gene>
    <name evidence="4" type="primary">RNF225</name>
</gene>
<name>RN225_HUMAN</name>
<dbReference type="EMBL" id="AC012313">
    <property type="status" value="NOT_ANNOTATED_CDS"/>
    <property type="molecule type" value="Genomic_DNA"/>
</dbReference>
<dbReference type="EMBL" id="CH471135">
    <property type="protein sequence ID" value="EAW72584.1"/>
    <property type="molecule type" value="Genomic_DNA"/>
</dbReference>
<dbReference type="CCDS" id="CCDS74477.1"/>
<dbReference type="RefSeq" id="NP_001182064.1">
    <property type="nucleotide sequence ID" value="NM_001195135.2"/>
</dbReference>
<dbReference type="RefSeq" id="XP_006723391.1">
    <property type="nucleotide sequence ID" value="XM_006723328.3"/>
</dbReference>
<dbReference type="STRING" id="9606.ENSP00000470441"/>
<dbReference type="iPTMnet" id="M0QZC1"/>
<dbReference type="PhosphoSitePlus" id="M0QZC1"/>
<dbReference type="BioMuta" id="RNF225"/>
<dbReference type="jPOST" id="M0QZC1"/>
<dbReference type="MassIVE" id="M0QZC1"/>
<dbReference type="PaxDb" id="9606-ENSP00000470441"/>
<dbReference type="PeptideAtlas" id="M0QZC1"/>
<dbReference type="DNASU" id="646862"/>
<dbReference type="Ensembl" id="ENST00000601382.3">
    <property type="protein sequence ID" value="ENSP00000470441.2"/>
    <property type="gene ID" value="ENSG00000269855.3"/>
</dbReference>
<dbReference type="GeneID" id="646862"/>
<dbReference type="KEGG" id="hsa:646862"/>
<dbReference type="MANE-Select" id="ENST00000601382.3">
    <property type="protein sequence ID" value="ENSP00000470441.2"/>
    <property type="RefSeq nucleotide sequence ID" value="NM_001195135.2"/>
    <property type="RefSeq protein sequence ID" value="NP_001182064.1"/>
</dbReference>
<dbReference type="UCSC" id="uc021vcz.1">
    <property type="organism name" value="human"/>
</dbReference>
<dbReference type="AGR" id="HGNC:51249"/>
<dbReference type="CTD" id="646862"/>
<dbReference type="GeneCards" id="RNF225"/>
<dbReference type="HGNC" id="HGNC:51249">
    <property type="gene designation" value="RNF225"/>
</dbReference>
<dbReference type="HPA" id="ENSG00000269855">
    <property type="expression patterns" value="Tissue enhanced (cervix, esophagus, skin, vagina)"/>
</dbReference>
<dbReference type="neXtProt" id="NX_M0QZC1"/>
<dbReference type="OpenTargets" id="ENSG00000269855"/>
<dbReference type="VEuPathDB" id="HostDB:ENSG00000269855"/>
<dbReference type="eggNOG" id="KOG2177">
    <property type="taxonomic scope" value="Eukaryota"/>
</dbReference>
<dbReference type="GeneTree" id="ENSGT00940000163974"/>
<dbReference type="HOGENOM" id="CLU_1013832_0_0_1"/>
<dbReference type="InParanoid" id="M0QZC1"/>
<dbReference type="OMA" id="WVFNAAV"/>
<dbReference type="OrthoDB" id="342730at2759"/>
<dbReference type="PAN-GO" id="M0QZC1">
    <property type="GO annotations" value="2 GO annotations based on evolutionary models"/>
</dbReference>
<dbReference type="SIGNOR" id="M0QZC1"/>
<dbReference type="BioGRID-ORCS" id="646862">
    <property type="hits" value="11 hits in 236 CRISPR screens"/>
</dbReference>
<dbReference type="GenomeRNAi" id="646862"/>
<dbReference type="Pharos" id="M0QZC1">
    <property type="development level" value="Tdark"/>
</dbReference>
<dbReference type="PRO" id="PR:M0QZC1"/>
<dbReference type="Proteomes" id="UP000005640">
    <property type="component" value="Chromosome 19"/>
</dbReference>
<dbReference type="RNAct" id="M0QZC1">
    <property type="molecule type" value="protein"/>
</dbReference>
<dbReference type="Bgee" id="ENSG00000269855">
    <property type="expression patterns" value="Expressed in esophagus mucosa and 27 other cell types or tissues"/>
</dbReference>
<dbReference type="GO" id="GO:0016020">
    <property type="term" value="C:membrane"/>
    <property type="evidence" value="ECO:0007669"/>
    <property type="project" value="UniProtKB-SubCell"/>
</dbReference>
<dbReference type="GO" id="GO:0061630">
    <property type="term" value="F:ubiquitin protein ligase activity"/>
    <property type="evidence" value="ECO:0000318"/>
    <property type="project" value="GO_Central"/>
</dbReference>
<dbReference type="GO" id="GO:0008270">
    <property type="term" value="F:zinc ion binding"/>
    <property type="evidence" value="ECO:0007669"/>
    <property type="project" value="UniProtKB-KW"/>
</dbReference>
<dbReference type="GO" id="GO:0016567">
    <property type="term" value="P:protein ubiquitination"/>
    <property type="evidence" value="ECO:0000318"/>
    <property type="project" value="GO_Central"/>
</dbReference>
<dbReference type="CDD" id="cd16556">
    <property type="entry name" value="RING-HC_RNF183-like"/>
    <property type="match status" value="1"/>
</dbReference>
<dbReference type="Gene3D" id="3.30.40.10">
    <property type="entry name" value="Zinc/RING finger domain, C3HC4 (zinc finger)"/>
    <property type="match status" value="1"/>
</dbReference>
<dbReference type="InterPro" id="IPR051435">
    <property type="entry name" value="RING_finger_E3_ubiq-ligases"/>
</dbReference>
<dbReference type="InterPro" id="IPR027370">
    <property type="entry name" value="Znf-RING_euk"/>
</dbReference>
<dbReference type="InterPro" id="IPR001841">
    <property type="entry name" value="Znf_RING"/>
</dbReference>
<dbReference type="InterPro" id="IPR013083">
    <property type="entry name" value="Znf_RING/FYVE/PHD"/>
</dbReference>
<dbReference type="InterPro" id="IPR017907">
    <property type="entry name" value="Znf_RING_CS"/>
</dbReference>
<dbReference type="PANTHER" id="PTHR22791:SF1">
    <property type="entry name" value="RING FINGER PROTEIN 225"/>
    <property type="match status" value="1"/>
</dbReference>
<dbReference type="PANTHER" id="PTHR22791">
    <property type="entry name" value="RING-TYPE DOMAIN-CONTAINING PROTEIN"/>
    <property type="match status" value="1"/>
</dbReference>
<dbReference type="Pfam" id="PF13445">
    <property type="entry name" value="zf-RING_UBOX"/>
    <property type="match status" value="1"/>
</dbReference>
<dbReference type="SMART" id="SM00184">
    <property type="entry name" value="RING"/>
    <property type="match status" value="1"/>
</dbReference>
<dbReference type="SUPFAM" id="SSF57850">
    <property type="entry name" value="RING/U-box"/>
    <property type="match status" value="1"/>
</dbReference>
<dbReference type="PROSITE" id="PS00518">
    <property type="entry name" value="ZF_RING_1"/>
    <property type="match status" value="1"/>
</dbReference>
<dbReference type="PROSITE" id="PS50089">
    <property type="entry name" value="ZF_RING_2"/>
    <property type="match status" value="1"/>
</dbReference>
<proteinExistence type="inferred from homology"/>
<feature type="chain" id="PRO_0000431309" description="RING finger protein 225">
    <location>
        <begin position="1"/>
        <end position="329"/>
    </location>
</feature>
<feature type="transmembrane region" description="Helical" evidence="1">
    <location>
        <begin position="203"/>
        <end position="223"/>
    </location>
</feature>
<feature type="zinc finger region" description="RING-type" evidence="2">
    <location>
        <begin position="64"/>
        <end position="112"/>
    </location>
</feature>
<feature type="region of interest" description="Disordered" evidence="3">
    <location>
        <begin position="1"/>
        <end position="55"/>
    </location>
</feature>
<feature type="region of interest" description="Disordered" evidence="3">
    <location>
        <begin position="122"/>
        <end position="181"/>
    </location>
</feature>
<feature type="region of interest" description="Disordered" evidence="3">
    <location>
        <begin position="248"/>
        <end position="329"/>
    </location>
</feature>
<feature type="compositionally biased region" description="Low complexity" evidence="3">
    <location>
        <begin position="14"/>
        <end position="32"/>
    </location>
</feature>
<feature type="compositionally biased region" description="Acidic residues" evidence="3">
    <location>
        <begin position="37"/>
        <end position="47"/>
    </location>
</feature>
<feature type="compositionally biased region" description="Pro residues" evidence="3">
    <location>
        <begin position="159"/>
        <end position="179"/>
    </location>
</feature>
<feature type="compositionally biased region" description="Acidic residues" evidence="3">
    <location>
        <begin position="281"/>
        <end position="293"/>
    </location>
</feature>
<feature type="compositionally biased region" description="Basic and acidic residues" evidence="3">
    <location>
        <begin position="294"/>
        <end position="304"/>
    </location>
</feature>
<protein>
    <recommendedName>
        <fullName evidence="4">RING finger protein 225</fullName>
    </recommendedName>
</protein>
<organism>
    <name type="scientific">Homo sapiens</name>
    <name type="common">Human</name>
    <dbReference type="NCBI Taxonomy" id="9606"/>
    <lineage>
        <taxon>Eukaryota</taxon>
        <taxon>Metazoa</taxon>
        <taxon>Chordata</taxon>
        <taxon>Craniata</taxon>
        <taxon>Vertebrata</taxon>
        <taxon>Euteleostomi</taxon>
        <taxon>Mammalia</taxon>
        <taxon>Eutheria</taxon>
        <taxon>Euarchontoglires</taxon>
        <taxon>Primates</taxon>
        <taxon>Haplorrhini</taxon>
        <taxon>Catarrhini</taxon>
        <taxon>Hominidae</taxon>
        <taxon>Homo</taxon>
    </lineage>
</organism>